<reference key="1">
    <citation type="journal article" date="2009" name="PLoS ONE">
        <title>Genome degradation in Brucella ovis corresponds with narrowing of its host range and tissue tropism.</title>
        <authorList>
            <person name="Tsolis R.M."/>
            <person name="Seshadri R."/>
            <person name="Santos R.L."/>
            <person name="Sangari F.J."/>
            <person name="Lobo J.M."/>
            <person name="de Jong M.F."/>
            <person name="Ren Q."/>
            <person name="Myers G."/>
            <person name="Brinkac L.M."/>
            <person name="Nelson W.C."/>
            <person name="Deboy R.T."/>
            <person name="Angiuoli S."/>
            <person name="Khouri H."/>
            <person name="Dimitrov G."/>
            <person name="Robinson J.R."/>
            <person name="Mulligan S."/>
            <person name="Walker R.L."/>
            <person name="Elzer P.E."/>
            <person name="Hassan K.A."/>
            <person name="Paulsen I.T."/>
        </authorList>
    </citation>
    <scope>NUCLEOTIDE SEQUENCE [LARGE SCALE GENOMIC DNA]</scope>
    <source>
        <strain>ATCC 25840 / 63/290 / NCTC 10512</strain>
    </source>
</reference>
<accession>A5VTT5</accession>
<name>HISZ_BRUO2</name>
<proteinExistence type="inferred from homology"/>
<feature type="chain" id="PRO_1000095447" description="ATP phosphoribosyltransferase regulatory subunit">
    <location>
        <begin position="1"/>
        <end position="376"/>
    </location>
</feature>
<gene>
    <name evidence="1" type="primary">hisZ</name>
    <name type="ordered locus">BOV_A0170</name>
</gene>
<evidence type="ECO:0000255" key="1">
    <source>
        <dbReference type="HAMAP-Rule" id="MF_00125"/>
    </source>
</evidence>
<comment type="function">
    <text evidence="1">Required for the first step of histidine biosynthesis. May allow the feedback regulation of ATP phosphoribosyltransferase activity by histidine.</text>
</comment>
<comment type="pathway">
    <text evidence="1">Amino-acid biosynthesis; L-histidine biosynthesis; L-histidine from 5-phospho-alpha-D-ribose 1-diphosphate: step 1/9.</text>
</comment>
<comment type="subunit">
    <text evidence="1">Heteromultimer composed of HisG and HisZ subunits.</text>
</comment>
<comment type="subcellular location">
    <subcellularLocation>
        <location evidence="1">Cytoplasm</location>
    </subcellularLocation>
</comment>
<comment type="miscellaneous">
    <text>This function is generally fulfilled by the C-terminal part of HisG, which is missing in some bacteria such as this one.</text>
</comment>
<comment type="similarity">
    <text evidence="1">Belongs to the class-II aminoacyl-tRNA synthetase family. HisZ subfamily.</text>
</comment>
<keyword id="KW-0028">Amino-acid biosynthesis</keyword>
<keyword id="KW-0963">Cytoplasm</keyword>
<keyword id="KW-0368">Histidine biosynthesis</keyword>
<dbReference type="EMBL" id="CP000709">
    <property type="protein sequence ID" value="ABQ62267.1"/>
    <property type="molecule type" value="Genomic_DNA"/>
</dbReference>
<dbReference type="RefSeq" id="WP_002972153.1">
    <property type="nucleotide sequence ID" value="NC_009504.1"/>
</dbReference>
<dbReference type="SMR" id="A5VTT5"/>
<dbReference type="KEGG" id="bov:BOV_A0170"/>
<dbReference type="HOGENOM" id="CLU_025113_6_0_5"/>
<dbReference type="UniPathway" id="UPA00031">
    <property type="reaction ID" value="UER00006"/>
</dbReference>
<dbReference type="Proteomes" id="UP000006383">
    <property type="component" value="Chromosome II"/>
</dbReference>
<dbReference type="GO" id="GO:0005737">
    <property type="term" value="C:cytoplasm"/>
    <property type="evidence" value="ECO:0007669"/>
    <property type="project" value="UniProtKB-SubCell"/>
</dbReference>
<dbReference type="GO" id="GO:0004821">
    <property type="term" value="F:histidine-tRNA ligase activity"/>
    <property type="evidence" value="ECO:0007669"/>
    <property type="project" value="TreeGrafter"/>
</dbReference>
<dbReference type="GO" id="GO:0006427">
    <property type="term" value="P:histidyl-tRNA aminoacylation"/>
    <property type="evidence" value="ECO:0007669"/>
    <property type="project" value="TreeGrafter"/>
</dbReference>
<dbReference type="GO" id="GO:0000105">
    <property type="term" value="P:L-histidine biosynthetic process"/>
    <property type="evidence" value="ECO:0007669"/>
    <property type="project" value="UniProtKB-UniRule"/>
</dbReference>
<dbReference type="Gene3D" id="3.30.930.10">
    <property type="entry name" value="Bira Bifunctional Protein, Domain 2"/>
    <property type="match status" value="1"/>
</dbReference>
<dbReference type="HAMAP" id="MF_00125">
    <property type="entry name" value="HisZ"/>
    <property type="match status" value="1"/>
</dbReference>
<dbReference type="InterPro" id="IPR045864">
    <property type="entry name" value="aa-tRNA-synth_II/BPL/LPL"/>
</dbReference>
<dbReference type="InterPro" id="IPR041715">
    <property type="entry name" value="HisRS-like_core"/>
</dbReference>
<dbReference type="InterPro" id="IPR004516">
    <property type="entry name" value="HisRS/HisZ"/>
</dbReference>
<dbReference type="InterPro" id="IPR004517">
    <property type="entry name" value="HisZ"/>
</dbReference>
<dbReference type="NCBIfam" id="NF008948">
    <property type="entry name" value="PRK12295.1-1"/>
    <property type="match status" value="1"/>
</dbReference>
<dbReference type="NCBIfam" id="NF008951">
    <property type="entry name" value="PRK12295.1-4"/>
    <property type="match status" value="1"/>
</dbReference>
<dbReference type="PANTHER" id="PTHR43707:SF1">
    <property type="entry name" value="HISTIDINE--TRNA LIGASE, MITOCHONDRIAL-RELATED"/>
    <property type="match status" value="1"/>
</dbReference>
<dbReference type="PANTHER" id="PTHR43707">
    <property type="entry name" value="HISTIDYL-TRNA SYNTHETASE"/>
    <property type="match status" value="1"/>
</dbReference>
<dbReference type="Pfam" id="PF13393">
    <property type="entry name" value="tRNA-synt_His"/>
    <property type="match status" value="2"/>
</dbReference>
<dbReference type="PIRSF" id="PIRSF001549">
    <property type="entry name" value="His-tRNA_synth"/>
    <property type="match status" value="1"/>
</dbReference>
<dbReference type="SUPFAM" id="SSF55681">
    <property type="entry name" value="Class II aaRS and biotin synthetases"/>
    <property type="match status" value="1"/>
</dbReference>
<protein>
    <recommendedName>
        <fullName evidence="1">ATP phosphoribosyltransferase regulatory subunit</fullName>
    </recommendedName>
</protein>
<sequence length="376" mass="40689">MVGSRTSPIFNALRVELNAREAELVEIPLIQPADPFLDMAGEDLRRRIFLTENENGDSLCLRPEFTIPVCRNHIALNAATPKRYAYLGEVFRQRRDGAAEFLQAGIEDLGAADEAASDARSLADALSCVKAIAPDAPLEIVLGDQSVFAGMLKALGLPQGWRKKLLRSFGDAHSMDLALAELTGTQRRDPLPESLAVLVAEGDEIGLARMLEAEMLEAGISPGAGRTPVEIARRLIEKEDLAATHFPAAALDLLRQFLAIRVSLDMAAVTLRAFAADNALDLGAVLQKFEARADAIAQAGIEMKDIIYDASFGRPLDYYTGLVYEIRDASNRQDGVLAGGGRYDRLLTMLGACEAIPGVGFSIWLDRLQALAGEKQ</sequence>
<organism>
    <name type="scientific">Brucella ovis (strain ATCC 25840 / 63/290 / NCTC 10512)</name>
    <dbReference type="NCBI Taxonomy" id="444178"/>
    <lineage>
        <taxon>Bacteria</taxon>
        <taxon>Pseudomonadati</taxon>
        <taxon>Pseudomonadota</taxon>
        <taxon>Alphaproteobacteria</taxon>
        <taxon>Hyphomicrobiales</taxon>
        <taxon>Brucellaceae</taxon>
        <taxon>Brucella/Ochrobactrum group</taxon>
        <taxon>Brucella</taxon>
    </lineage>
</organism>